<evidence type="ECO:0000250" key="1"/>
<evidence type="ECO:0000256" key="2">
    <source>
        <dbReference type="SAM" id="MobiDB-lite"/>
    </source>
</evidence>
<evidence type="ECO:0000305" key="3"/>
<keyword id="KW-0963">Cytoplasm</keyword>
<keyword id="KW-0520">NAD</keyword>
<keyword id="KW-0560">Oxidoreductase</keyword>
<protein>
    <recommendedName>
        <fullName>L-lactate dehydrogenase</fullName>
        <shortName>LDH</shortName>
        <ecNumber>1.1.1.27</ecNumber>
    </recommendedName>
</protein>
<reference key="1">
    <citation type="journal article" date="1992" name="Proc. Natl. Acad. Sci. U.S.A.">
        <title>Evolutionary implications of the cDNA sequence of the single lactate dehydrogenase of a lamprey.</title>
        <authorList>
            <person name="Stock D.W."/>
            <person name="Whitt G.S."/>
        </authorList>
    </citation>
    <scope>NUCLEOTIDE SEQUENCE [MRNA]</scope>
</reference>
<sequence>MASTKGKLIHEMVPSKERDPPHSKVTIVGVGQVGMAAAISVLLRDLADELALVDVVEDRLKGEMMDLLHGSLFLKTAKIVADKDYSVTAGSRLVVVTAGARQQEGESRLNLVQRNVNIFKFIIPNIVKYSPNCILLVVSNPVDILTYVAWKLSGLPKHRVIGSGCNLDSARFRYLMSERLGVNSASCHGWIIGEHGDSSVPVWSGVNVAGVGLQSLNPDIGTPKDGEDWKSVHKQVVDSAYEVIKLKGYTSWAIGLSVADLAETILKNLRRVHPVSTHCKGQHGVHDDVFLSLPCVLGSEGITDIINQTLKKEEEAQVQKSAETLWNVQKELTF</sequence>
<proteinExistence type="evidence at transcript level"/>
<dbReference type="EC" id="1.1.1.27"/>
<dbReference type="EMBL" id="M74064">
    <property type="protein sequence ID" value="AAA49267.1"/>
    <property type="molecule type" value="mRNA"/>
</dbReference>
<dbReference type="PIR" id="A38231">
    <property type="entry name" value="A38231"/>
</dbReference>
<dbReference type="RefSeq" id="XP_032804827.1">
    <property type="nucleotide sequence ID" value="XM_032948936.1"/>
</dbReference>
<dbReference type="RefSeq" id="XP_032804828.1">
    <property type="nucleotide sequence ID" value="XM_032948937.1"/>
</dbReference>
<dbReference type="SMR" id="P33571"/>
<dbReference type="STRING" id="7757.ENSPMAP00000002676"/>
<dbReference type="Ensembl" id="ENSPMAT00000002689.1">
    <property type="protein sequence ID" value="ENSPMAP00000002676.1"/>
    <property type="gene ID" value="ENSPMAG00000002438.1"/>
</dbReference>
<dbReference type="GeneID" id="103091776"/>
<dbReference type="GeneTree" id="ENSGT00940000153525"/>
<dbReference type="HOGENOM" id="CLU_045401_0_2_1"/>
<dbReference type="OMA" id="LRCTGKN"/>
<dbReference type="OrthoDB" id="5405561at2759"/>
<dbReference type="TreeFam" id="TF314963"/>
<dbReference type="UniPathway" id="UPA00554">
    <property type="reaction ID" value="UER00611"/>
</dbReference>
<dbReference type="Proteomes" id="UP001318040">
    <property type="component" value="Chromosome 7"/>
</dbReference>
<dbReference type="GO" id="GO:0005737">
    <property type="term" value="C:cytoplasm"/>
    <property type="evidence" value="ECO:0007669"/>
    <property type="project" value="UniProtKB-SubCell"/>
</dbReference>
<dbReference type="GO" id="GO:0004459">
    <property type="term" value="F:L-lactate dehydrogenase activity"/>
    <property type="evidence" value="ECO:0007669"/>
    <property type="project" value="UniProtKB-EC"/>
</dbReference>
<dbReference type="GO" id="GO:0006089">
    <property type="term" value="P:lactate metabolic process"/>
    <property type="evidence" value="ECO:0007669"/>
    <property type="project" value="TreeGrafter"/>
</dbReference>
<dbReference type="CDD" id="cd05293">
    <property type="entry name" value="LDH_1"/>
    <property type="match status" value="1"/>
</dbReference>
<dbReference type="FunFam" id="3.40.50.720:FF:000029">
    <property type="entry name" value="L-lactate dehydrogenase A chain"/>
    <property type="match status" value="1"/>
</dbReference>
<dbReference type="FunFam" id="3.90.110.10:FF:000003">
    <property type="entry name" value="L-lactate dehydrogenase A chain"/>
    <property type="match status" value="1"/>
</dbReference>
<dbReference type="Gene3D" id="3.90.110.10">
    <property type="entry name" value="Lactate dehydrogenase/glycoside hydrolase, family 4, C-terminal"/>
    <property type="match status" value="1"/>
</dbReference>
<dbReference type="Gene3D" id="3.40.50.720">
    <property type="entry name" value="NAD(P)-binding Rossmann-like Domain"/>
    <property type="match status" value="1"/>
</dbReference>
<dbReference type="HAMAP" id="MF_00488">
    <property type="entry name" value="Lactate_dehydrog"/>
    <property type="match status" value="1"/>
</dbReference>
<dbReference type="InterPro" id="IPR001557">
    <property type="entry name" value="L-lactate/malate_DH"/>
</dbReference>
<dbReference type="InterPro" id="IPR011304">
    <property type="entry name" value="L-lactate_DH"/>
</dbReference>
<dbReference type="InterPro" id="IPR018177">
    <property type="entry name" value="L-lactate_DH_AS"/>
</dbReference>
<dbReference type="InterPro" id="IPR022383">
    <property type="entry name" value="Lactate/malate_DH_C"/>
</dbReference>
<dbReference type="InterPro" id="IPR001236">
    <property type="entry name" value="Lactate/malate_DH_N"/>
</dbReference>
<dbReference type="InterPro" id="IPR015955">
    <property type="entry name" value="Lactate_DH/Glyco_Ohase_4_C"/>
</dbReference>
<dbReference type="InterPro" id="IPR036291">
    <property type="entry name" value="NAD(P)-bd_dom_sf"/>
</dbReference>
<dbReference type="NCBIfam" id="TIGR01771">
    <property type="entry name" value="L-LDH-NAD"/>
    <property type="match status" value="1"/>
</dbReference>
<dbReference type="PANTHER" id="PTHR43128">
    <property type="entry name" value="L-2-HYDROXYCARBOXYLATE DEHYDROGENASE (NAD(P)(+))"/>
    <property type="match status" value="1"/>
</dbReference>
<dbReference type="PANTHER" id="PTHR43128:SF16">
    <property type="entry name" value="L-LACTATE DEHYDROGENASE"/>
    <property type="match status" value="1"/>
</dbReference>
<dbReference type="Pfam" id="PF02866">
    <property type="entry name" value="Ldh_1_C"/>
    <property type="match status" value="1"/>
</dbReference>
<dbReference type="Pfam" id="PF00056">
    <property type="entry name" value="Ldh_1_N"/>
    <property type="match status" value="1"/>
</dbReference>
<dbReference type="PIRSF" id="PIRSF000102">
    <property type="entry name" value="Lac_mal_DH"/>
    <property type="match status" value="1"/>
</dbReference>
<dbReference type="PRINTS" id="PR00086">
    <property type="entry name" value="LLDHDRGNASE"/>
</dbReference>
<dbReference type="SUPFAM" id="SSF56327">
    <property type="entry name" value="LDH C-terminal domain-like"/>
    <property type="match status" value="1"/>
</dbReference>
<dbReference type="SUPFAM" id="SSF51735">
    <property type="entry name" value="NAD(P)-binding Rossmann-fold domains"/>
    <property type="match status" value="1"/>
</dbReference>
<dbReference type="PROSITE" id="PS00064">
    <property type="entry name" value="L_LDH"/>
    <property type="match status" value="1"/>
</dbReference>
<accession>P33571</accession>
<organism>
    <name type="scientific">Petromyzon marinus</name>
    <name type="common">Sea lamprey</name>
    <dbReference type="NCBI Taxonomy" id="7757"/>
    <lineage>
        <taxon>Eukaryota</taxon>
        <taxon>Metazoa</taxon>
        <taxon>Chordata</taxon>
        <taxon>Craniata</taxon>
        <taxon>Vertebrata</taxon>
        <taxon>Cyclostomata</taxon>
        <taxon>Hyperoartia</taxon>
        <taxon>Petromyzontiformes</taxon>
        <taxon>Petromyzontidae</taxon>
        <taxon>Petromyzon</taxon>
    </lineage>
</organism>
<feature type="initiator methionine" description="Removed" evidence="1">
    <location>
        <position position="1"/>
    </location>
</feature>
<feature type="chain" id="PRO_0000168488" description="L-lactate dehydrogenase">
    <location>
        <begin position="2"/>
        <end position="334"/>
    </location>
</feature>
<feature type="region of interest" description="Disordered" evidence="2">
    <location>
        <begin position="1"/>
        <end position="22"/>
    </location>
</feature>
<feature type="compositionally biased region" description="Basic and acidic residues" evidence="2">
    <location>
        <begin position="8"/>
        <end position="22"/>
    </location>
</feature>
<feature type="active site" description="Proton acceptor" evidence="1">
    <location>
        <position position="195"/>
    </location>
</feature>
<feature type="binding site" evidence="1">
    <location>
        <begin position="31"/>
        <end position="59"/>
    </location>
    <ligand>
        <name>NAD(+)</name>
        <dbReference type="ChEBI" id="CHEBI:57540"/>
    </ligand>
</feature>
<feature type="binding site" evidence="1">
    <location>
        <position position="101"/>
    </location>
    <ligand>
        <name>NAD(+)</name>
        <dbReference type="ChEBI" id="CHEBI:57540"/>
    </ligand>
</feature>
<feature type="binding site" evidence="1">
    <location>
        <position position="108"/>
    </location>
    <ligand>
        <name>substrate</name>
    </ligand>
</feature>
<feature type="binding site" evidence="1">
    <location>
        <position position="140"/>
    </location>
    <ligand>
        <name>NAD(+)</name>
        <dbReference type="ChEBI" id="CHEBI:57540"/>
    </ligand>
</feature>
<feature type="binding site" evidence="1">
    <location>
        <position position="140"/>
    </location>
    <ligand>
        <name>substrate</name>
    </ligand>
</feature>
<feature type="binding site" evidence="1">
    <location>
        <position position="171"/>
    </location>
    <ligand>
        <name>substrate</name>
    </ligand>
</feature>
<feature type="binding site" evidence="1">
    <location>
        <position position="250"/>
    </location>
    <ligand>
        <name>substrate</name>
    </ligand>
</feature>
<name>LDH_PETMA</name>
<comment type="catalytic activity">
    <reaction>
        <text>(S)-lactate + NAD(+) = pyruvate + NADH + H(+)</text>
        <dbReference type="Rhea" id="RHEA:23444"/>
        <dbReference type="ChEBI" id="CHEBI:15361"/>
        <dbReference type="ChEBI" id="CHEBI:15378"/>
        <dbReference type="ChEBI" id="CHEBI:16651"/>
        <dbReference type="ChEBI" id="CHEBI:57540"/>
        <dbReference type="ChEBI" id="CHEBI:57945"/>
        <dbReference type="EC" id="1.1.1.27"/>
    </reaction>
</comment>
<comment type="pathway">
    <text>Fermentation; pyruvate fermentation to lactate; (S)-lactate from pyruvate: step 1/1.</text>
</comment>
<comment type="subunit">
    <text evidence="1">Homotetramer.</text>
</comment>
<comment type="subcellular location">
    <subcellularLocation>
        <location evidence="1">Cytoplasm</location>
    </subcellularLocation>
</comment>
<comment type="similarity">
    <text evidence="3">Belongs to the LDH/MDH superfamily. LDH family.</text>
</comment>